<accession>D4AIS9</accession>
<comment type="subcellular location">
    <subcellularLocation>
        <location evidence="1">Secreted</location>
    </subcellularLocation>
</comment>
<protein>
    <recommendedName>
        <fullName evidence="2">Extracellular protein ARB_04177</fullName>
    </recommendedName>
</protein>
<dbReference type="EMBL" id="ABSU01000001">
    <property type="protein sequence ID" value="EFE36652.1"/>
    <property type="molecule type" value="Genomic_DNA"/>
</dbReference>
<dbReference type="RefSeq" id="XP_003017297.1">
    <property type="nucleotide sequence ID" value="XM_003017251.1"/>
</dbReference>
<dbReference type="STRING" id="663331.D4AIS9"/>
<dbReference type="GeneID" id="9524406"/>
<dbReference type="KEGG" id="abe:ARB_04177"/>
<dbReference type="eggNOG" id="ENOG502QW99">
    <property type="taxonomic scope" value="Eukaryota"/>
</dbReference>
<dbReference type="HOGENOM" id="CLU_099087_0_0_1"/>
<dbReference type="OMA" id="AAYANCF"/>
<dbReference type="Proteomes" id="UP000008866">
    <property type="component" value="Unassembled WGS sequence"/>
</dbReference>
<dbReference type="GO" id="GO:0005576">
    <property type="term" value="C:extracellular region"/>
    <property type="evidence" value="ECO:0007669"/>
    <property type="project" value="UniProtKB-SubCell"/>
</dbReference>
<dbReference type="GO" id="GO:0008081">
    <property type="term" value="F:phosphoric diester hydrolase activity"/>
    <property type="evidence" value="ECO:0007669"/>
    <property type="project" value="InterPro"/>
</dbReference>
<dbReference type="GO" id="GO:0006629">
    <property type="term" value="P:lipid metabolic process"/>
    <property type="evidence" value="ECO:0007669"/>
    <property type="project" value="InterPro"/>
</dbReference>
<dbReference type="Gene3D" id="3.20.20.190">
    <property type="entry name" value="Phosphatidylinositol (PI) phosphodiesterase"/>
    <property type="match status" value="1"/>
</dbReference>
<dbReference type="InterPro" id="IPR017946">
    <property type="entry name" value="PLC-like_Pdiesterase_TIM-brl"/>
</dbReference>
<dbReference type="SUPFAM" id="SSF51695">
    <property type="entry name" value="PLC-like phosphodiesterases"/>
    <property type="match status" value="1"/>
</dbReference>
<sequence>MDGFNPRATTVAEYMDGTPKFRTDLYASTCGQLLSHKEYMRVVDMYGLKFTPELKAPEVPMPFMGKYSQEQYAQQLIDEYRAARISPDRVFLQSFSIDDIYFWNRHDADYARQAMFLDSRPDTPEGARQATATMAQLKQSGIRTLSPAFHALLKLDAGNNIVPSDYAVAAKKAGIKLTTWSLERSGPLNKVRASGDFYYSSIAAAIKDDGDIYRVVDVLAQKVGVAGIFSDWPATVSFYANCFNL</sequence>
<name>A4177_ARTBC</name>
<proteinExistence type="evidence at protein level"/>
<keyword id="KW-1185">Reference proteome</keyword>
<keyword id="KW-0964">Secreted</keyword>
<gene>
    <name type="ORF">ARB_04177</name>
</gene>
<reference key="1">
    <citation type="journal article" date="2011" name="Genome Biol.">
        <title>Comparative and functional genomics provide insights into the pathogenicity of dermatophytic fungi.</title>
        <authorList>
            <person name="Burmester A."/>
            <person name="Shelest E."/>
            <person name="Gloeckner G."/>
            <person name="Heddergott C."/>
            <person name="Schindler S."/>
            <person name="Staib P."/>
            <person name="Heidel A."/>
            <person name="Felder M."/>
            <person name="Petzold A."/>
            <person name="Szafranski K."/>
            <person name="Feuermann M."/>
            <person name="Pedruzzi I."/>
            <person name="Priebe S."/>
            <person name="Groth M."/>
            <person name="Winkler R."/>
            <person name="Li W."/>
            <person name="Kniemeyer O."/>
            <person name="Schroeckh V."/>
            <person name="Hertweck C."/>
            <person name="Hube B."/>
            <person name="White T.C."/>
            <person name="Platzer M."/>
            <person name="Guthke R."/>
            <person name="Heitman J."/>
            <person name="Woestemeyer J."/>
            <person name="Zipfel P.F."/>
            <person name="Monod M."/>
            <person name="Brakhage A.A."/>
        </authorList>
    </citation>
    <scope>NUCLEOTIDE SEQUENCE [LARGE SCALE GENOMIC DNA]</scope>
    <source>
        <strain evidence="3">ATCC MYA-4681 / CBS 112371</strain>
    </source>
</reference>
<reference key="2">
    <citation type="journal article" date="2011" name="Proteomics">
        <title>Identification of novel secreted proteases during extracellular proteolysis by dermatophytes at acidic pH.</title>
        <authorList>
            <person name="Sriranganadane D."/>
            <person name="Waridel P."/>
            <person name="Salamin K."/>
            <person name="Feuermann M."/>
            <person name="Mignon B."/>
            <person name="Staib P."/>
            <person name="Neuhaus J.M."/>
            <person name="Quadroni M."/>
            <person name="Monod M."/>
        </authorList>
    </citation>
    <scope>IDENTIFICATION BY MASS SPECTROMETRY</scope>
    <scope>SUBCELLULAR LOCATION</scope>
</reference>
<feature type="chain" id="PRO_0000434482" description="Extracellular protein ARB_04177">
    <location>
        <begin position="1"/>
        <end position="245"/>
    </location>
</feature>
<evidence type="ECO:0000269" key="1">
    <source>
    </source>
</evidence>
<evidence type="ECO:0000305" key="2"/>
<evidence type="ECO:0000312" key="3">
    <source>
        <dbReference type="Proteomes" id="UP000008866"/>
    </source>
</evidence>
<organism>
    <name type="scientific">Arthroderma benhamiae (strain ATCC MYA-4681 / CBS 112371)</name>
    <name type="common">Trichophyton mentagrophytes</name>
    <dbReference type="NCBI Taxonomy" id="663331"/>
    <lineage>
        <taxon>Eukaryota</taxon>
        <taxon>Fungi</taxon>
        <taxon>Dikarya</taxon>
        <taxon>Ascomycota</taxon>
        <taxon>Pezizomycotina</taxon>
        <taxon>Eurotiomycetes</taxon>
        <taxon>Eurotiomycetidae</taxon>
        <taxon>Onygenales</taxon>
        <taxon>Arthrodermataceae</taxon>
        <taxon>Trichophyton</taxon>
    </lineage>
</organism>